<keyword id="KW-0114">cAMP</keyword>
<keyword id="KW-0116">cAMP-binding</keyword>
<keyword id="KW-1003">Cell membrane</keyword>
<keyword id="KW-0325">Glycoprotein</keyword>
<keyword id="KW-0407">Ion channel</keyword>
<keyword id="KW-0406">Ion transport</keyword>
<keyword id="KW-1071">Ligand-gated ion channel</keyword>
<keyword id="KW-0472">Membrane</keyword>
<keyword id="KW-0547">Nucleotide-binding</keyword>
<keyword id="KW-0630">Potassium</keyword>
<keyword id="KW-0631">Potassium channel</keyword>
<keyword id="KW-0633">Potassium transport</keyword>
<keyword id="KW-1185">Reference proteome</keyword>
<keyword id="KW-0915">Sodium</keyword>
<keyword id="KW-0894">Sodium channel</keyword>
<keyword id="KW-0739">Sodium transport</keyword>
<keyword id="KW-0812">Transmembrane</keyword>
<keyword id="KW-1133">Transmembrane helix</keyword>
<keyword id="KW-0813">Transport</keyword>
<keyword id="KW-0851">Voltage-gated channel</keyword>
<protein>
    <recommendedName>
        <fullName>Potassium/sodium hyperpolarization-activated cyclic nucleotide-gated channel 1</fullName>
    </recommendedName>
</protein>
<reference key="1">
    <citation type="journal article" date="2000" name="Brain Res. Mol. Brain Res.">
        <title>Cloning and localization of the hyperpolarization-activated cyclic nucleotide-gated channel family in rat brain.</title>
        <authorList>
            <person name="Monteggia L.M."/>
            <person name="Eisch A.J."/>
            <person name="Tang M.D."/>
            <person name="Kaczmarek L.K."/>
            <person name="Nestler E.J."/>
        </authorList>
    </citation>
    <scope>NUCLEOTIDE SEQUENCE [MRNA]</scope>
    <scope>TISSUE SPECIFICITY</scope>
    <source>
        <strain>Sprague-Dawley</strain>
        <tissue>Brain</tissue>
    </source>
</reference>
<reference key="2">
    <citation type="journal article" date="2004" name="Nature">
        <title>Genome sequence of the Brown Norway rat yields insights into mammalian evolution.</title>
        <authorList>
            <person name="Gibbs R.A."/>
            <person name="Weinstock G.M."/>
            <person name="Metzker M.L."/>
            <person name="Muzny D.M."/>
            <person name="Sodergren E.J."/>
            <person name="Scherer S."/>
            <person name="Scott G."/>
            <person name="Steffen D."/>
            <person name="Worley K.C."/>
            <person name="Burch P.E."/>
            <person name="Okwuonu G."/>
            <person name="Hines S."/>
            <person name="Lewis L."/>
            <person name="Deramo C."/>
            <person name="Delgado O."/>
            <person name="Dugan-Rocha S."/>
            <person name="Miner G."/>
            <person name="Morgan M."/>
            <person name="Hawes A."/>
            <person name="Gill R."/>
            <person name="Holt R.A."/>
            <person name="Adams M.D."/>
            <person name="Amanatides P.G."/>
            <person name="Baden-Tillson H."/>
            <person name="Barnstead M."/>
            <person name="Chin S."/>
            <person name="Evans C.A."/>
            <person name="Ferriera S."/>
            <person name="Fosler C."/>
            <person name="Glodek A."/>
            <person name="Gu Z."/>
            <person name="Jennings D."/>
            <person name="Kraft C.L."/>
            <person name="Nguyen T."/>
            <person name="Pfannkoch C.M."/>
            <person name="Sitter C."/>
            <person name="Sutton G.G."/>
            <person name="Venter J.C."/>
            <person name="Woodage T."/>
            <person name="Smith D."/>
            <person name="Lee H.-M."/>
            <person name="Gustafson E."/>
            <person name="Cahill P."/>
            <person name="Kana A."/>
            <person name="Doucette-Stamm L."/>
            <person name="Weinstock K."/>
            <person name="Fechtel K."/>
            <person name="Weiss R.B."/>
            <person name="Dunn D.M."/>
            <person name="Green E.D."/>
            <person name="Blakesley R.W."/>
            <person name="Bouffard G.G."/>
            <person name="De Jong P.J."/>
            <person name="Osoegawa K."/>
            <person name="Zhu B."/>
            <person name="Marra M."/>
            <person name="Schein J."/>
            <person name="Bosdet I."/>
            <person name="Fjell C."/>
            <person name="Jones S."/>
            <person name="Krzywinski M."/>
            <person name="Mathewson C."/>
            <person name="Siddiqui A."/>
            <person name="Wye N."/>
            <person name="McPherson J."/>
            <person name="Zhao S."/>
            <person name="Fraser C.M."/>
            <person name="Shetty J."/>
            <person name="Shatsman S."/>
            <person name="Geer K."/>
            <person name="Chen Y."/>
            <person name="Abramzon S."/>
            <person name="Nierman W.C."/>
            <person name="Havlak P.H."/>
            <person name="Chen R."/>
            <person name="Durbin K.J."/>
            <person name="Egan A."/>
            <person name="Ren Y."/>
            <person name="Song X.-Z."/>
            <person name="Li B."/>
            <person name="Liu Y."/>
            <person name="Qin X."/>
            <person name="Cawley S."/>
            <person name="Cooney A.J."/>
            <person name="D'Souza L.M."/>
            <person name="Martin K."/>
            <person name="Wu J.Q."/>
            <person name="Gonzalez-Garay M.L."/>
            <person name="Jackson A.R."/>
            <person name="Kalafus K.J."/>
            <person name="McLeod M.P."/>
            <person name="Milosavljevic A."/>
            <person name="Virk D."/>
            <person name="Volkov A."/>
            <person name="Wheeler D.A."/>
            <person name="Zhang Z."/>
            <person name="Bailey J.A."/>
            <person name="Eichler E.E."/>
            <person name="Tuzun E."/>
            <person name="Birney E."/>
            <person name="Mongin E."/>
            <person name="Ureta-Vidal A."/>
            <person name="Woodwark C."/>
            <person name="Zdobnov E."/>
            <person name="Bork P."/>
            <person name="Suyama M."/>
            <person name="Torrents D."/>
            <person name="Alexandersson M."/>
            <person name="Trask B.J."/>
            <person name="Young J.M."/>
            <person name="Huang H."/>
            <person name="Wang H."/>
            <person name="Xing H."/>
            <person name="Daniels S."/>
            <person name="Gietzen D."/>
            <person name="Schmidt J."/>
            <person name="Stevens K."/>
            <person name="Vitt U."/>
            <person name="Wingrove J."/>
            <person name="Camara F."/>
            <person name="Mar Alba M."/>
            <person name="Abril J.F."/>
            <person name="Guigo R."/>
            <person name="Smit A."/>
            <person name="Dubchak I."/>
            <person name="Rubin E.M."/>
            <person name="Couronne O."/>
            <person name="Poliakov A."/>
            <person name="Huebner N."/>
            <person name="Ganten D."/>
            <person name="Goesele C."/>
            <person name="Hummel O."/>
            <person name="Kreitler T."/>
            <person name="Lee Y.-A."/>
            <person name="Monti J."/>
            <person name="Schulz H."/>
            <person name="Zimdahl H."/>
            <person name="Himmelbauer H."/>
            <person name="Lehrach H."/>
            <person name="Jacob H.J."/>
            <person name="Bromberg S."/>
            <person name="Gullings-Handley J."/>
            <person name="Jensen-Seaman M.I."/>
            <person name="Kwitek A.E."/>
            <person name="Lazar J."/>
            <person name="Pasko D."/>
            <person name="Tonellato P.J."/>
            <person name="Twigger S."/>
            <person name="Ponting C.P."/>
            <person name="Duarte J.M."/>
            <person name="Rice S."/>
            <person name="Goodstadt L."/>
            <person name="Beatson S.A."/>
            <person name="Emes R.D."/>
            <person name="Winter E.E."/>
            <person name="Webber C."/>
            <person name="Brandt P."/>
            <person name="Nyakatura G."/>
            <person name="Adetobi M."/>
            <person name="Chiaromonte F."/>
            <person name="Elnitski L."/>
            <person name="Eswara P."/>
            <person name="Hardison R.C."/>
            <person name="Hou M."/>
            <person name="Kolbe D."/>
            <person name="Makova K."/>
            <person name="Miller W."/>
            <person name="Nekrutenko A."/>
            <person name="Riemer C."/>
            <person name="Schwartz S."/>
            <person name="Taylor J."/>
            <person name="Yang S."/>
            <person name="Zhang Y."/>
            <person name="Lindpaintner K."/>
            <person name="Andrews T.D."/>
            <person name="Caccamo M."/>
            <person name="Clamp M."/>
            <person name="Clarke L."/>
            <person name="Curwen V."/>
            <person name="Durbin R.M."/>
            <person name="Eyras E."/>
            <person name="Searle S.M."/>
            <person name="Cooper G.M."/>
            <person name="Batzoglou S."/>
            <person name="Brudno M."/>
            <person name="Sidow A."/>
            <person name="Stone E.A."/>
            <person name="Payseur B.A."/>
            <person name="Bourque G."/>
            <person name="Lopez-Otin C."/>
            <person name="Puente X.S."/>
            <person name="Chakrabarti K."/>
            <person name="Chatterji S."/>
            <person name="Dewey C."/>
            <person name="Pachter L."/>
            <person name="Bray N."/>
            <person name="Yap V.B."/>
            <person name="Caspi A."/>
            <person name="Tesler G."/>
            <person name="Pevzner P.A."/>
            <person name="Haussler D."/>
            <person name="Roskin K.M."/>
            <person name="Baertsch R."/>
            <person name="Clawson H."/>
            <person name="Furey T.S."/>
            <person name="Hinrichs A.S."/>
            <person name="Karolchik D."/>
            <person name="Kent W.J."/>
            <person name="Rosenbloom K.R."/>
            <person name="Trumbower H."/>
            <person name="Weirauch M."/>
            <person name="Cooper D.N."/>
            <person name="Stenson P.D."/>
            <person name="Ma B."/>
            <person name="Brent M."/>
            <person name="Arumugam M."/>
            <person name="Shteynberg D."/>
            <person name="Copley R.R."/>
            <person name="Taylor M.S."/>
            <person name="Riethman H."/>
            <person name="Mudunuri U."/>
            <person name="Peterson J."/>
            <person name="Guyer M."/>
            <person name="Felsenfeld A."/>
            <person name="Old S."/>
            <person name="Mockrin S."/>
            <person name="Collins F.S."/>
        </authorList>
    </citation>
    <scope>NUCLEOTIDE SEQUENCE [LARGE SCALE GENOMIC DNA]</scope>
    <source>
        <strain>Brown Norway</strain>
    </source>
</reference>
<reference key="3">
    <citation type="journal article" date="2001" name="Nature">
        <title>Hyperpolarization-activated channels HCN1 and HCN4 mediate responses to sour stimuli.</title>
        <authorList>
            <person name="Stevens D.R."/>
            <person name="Seifert R."/>
            <person name="Bufe B."/>
            <person name="Mueller F."/>
            <person name="Kremmer E."/>
            <person name="Gauss R."/>
            <person name="Meyerhof W."/>
            <person name="Kaupp U.B."/>
            <person name="Lindemann B."/>
        </authorList>
    </citation>
    <scope>FUNCTION</scope>
    <scope>SUBCELLULAR LOCATION</scope>
    <scope>TISSUE SPECIFICITY</scope>
</reference>
<name>HCN1_RAT</name>
<gene>
    <name type="primary">Hcn1</name>
</gene>
<accession>Q9JKB0</accession>
<accession>F1LSH6</accession>
<dbReference type="EMBL" id="AF247450">
    <property type="protein sequence ID" value="AAF62173.1"/>
    <property type="molecule type" value="mRNA"/>
</dbReference>
<dbReference type="EMBL" id="AABR07008268">
    <property type="status" value="NOT_ANNOTATED_CDS"/>
    <property type="molecule type" value="Genomic_DNA"/>
</dbReference>
<dbReference type="EMBL" id="AABR07008269">
    <property type="status" value="NOT_ANNOTATED_CDS"/>
    <property type="molecule type" value="Genomic_DNA"/>
</dbReference>
<dbReference type="EMBL" id="AABR07008270">
    <property type="status" value="NOT_ANNOTATED_CDS"/>
    <property type="molecule type" value="Genomic_DNA"/>
</dbReference>
<dbReference type="EMBL" id="AABR07008271">
    <property type="status" value="NOT_ANNOTATED_CDS"/>
    <property type="molecule type" value="Genomic_DNA"/>
</dbReference>
<dbReference type="EMBL" id="AABR07008272">
    <property type="status" value="NOT_ANNOTATED_CDS"/>
    <property type="molecule type" value="Genomic_DNA"/>
</dbReference>
<dbReference type="RefSeq" id="NP_445827.2">
    <property type="nucleotide sequence ID" value="NM_053375.2"/>
</dbReference>
<dbReference type="SMR" id="Q9JKB0"/>
<dbReference type="BioGRID" id="249933">
    <property type="interactions" value="4"/>
</dbReference>
<dbReference type="FunCoup" id="Q9JKB0">
    <property type="interactions" value="2094"/>
</dbReference>
<dbReference type="STRING" id="10116.ENSRNOP00000073952"/>
<dbReference type="GlyCosmos" id="Q9JKB0">
    <property type="glycosylation" value="1 site, No reported glycans"/>
</dbReference>
<dbReference type="GlyGen" id="Q9JKB0">
    <property type="glycosylation" value="1 site"/>
</dbReference>
<dbReference type="iPTMnet" id="Q9JKB0"/>
<dbReference type="PhosphoSitePlus" id="Q9JKB0"/>
<dbReference type="PaxDb" id="10116-ENSRNOP00000016142"/>
<dbReference type="ABCD" id="Q9JKB0">
    <property type="antibodies" value="1 sequenced antibody"/>
</dbReference>
<dbReference type="Ensembl" id="ENSRNOT00000089218.2">
    <property type="protein sequence ID" value="ENSRNOP00000073952.1"/>
    <property type="gene ID" value="ENSRNOG00000055382.2"/>
</dbReference>
<dbReference type="GeneID" id="84390"/>
<dbReference type="KEGG" id="rno:84390"/>
<dbReference type="AGR" id="RGD:620688"/>
<dbReference type="CTD" id="348980"/>
<dbReference type="RGD" id="620688">
    <property type="gene designation" value="Hcn1"/>
</dbReference>
<dbReference type="eggNOG" id="KOG0498">
    <property type="taxonomic scope" value="Eukaryota"/>
</dbReference>
<dbReference type="GeneTree" id="ENSGT00940000158207"/>
<dbReference type="HOGENOM" id="CLU_005746_15_1_1"/>
<dbReference type="InParanoid" id="Q9JKB0"/>
<dbReference type="OMA" id="TIITRPH"/>
<dbReference type="PhylomeDB" id="Q9JKB0"/>
<dbReference type="Reactome" id="R-RNO-1296061">
    <property type="pathway name" value="HCN channels"/>
</dbReference>
<dbReference type="PRO" id="PR:Q9JKB0"/>
<dbReference type="Proteomes" id="UP000002494">
    <property type="component" value="Chromosome 2"/>
</dbReference>
<dbReference type="Bgee" id="ENSRNOG00000055382">
    <property type="expression patterns" value="Expressed in frontal cortex and 1 other cell type or tissue"/>
</dbReference>
<dbReference type="GO" id="GO:0097440">
    <property type="term" value="C:apical dendrite"/>
    <property type="evidence" value="ECO:0000314"/>
    <property type="project" value="RGD"/>
</dbReference>
<dbReference type="GO" id="GO:0030424">
    <property type="term" value="C:axon"/>
    <property type="evidence" value="ECO:0000314"/>
    <property type="project" value="RGD"/>
</dbReference>
<dbReference type="GO" id="GO:0043679">
    <property type="term" value="C:axon terminus"/>
    <property type="evidence" value="ECO:0000314"/>
    <property type="project" value="RGD"/>
</dbReference>
<dbReference type="GO" id="GO:0016323">
    <property type="term" value="C:basolateral plasma membrane"/>
    <property type="evidence" value="ECO:0000314"/>
    <property type="project" value="RGD"/>
</dbReference>
<dbReference type="GO" id="GO:0009986">
    <property type="term" value="C:cell surface"/>
    <property type="evidence" value="ECO:0000314"/>
    <property type="project" value="RGD"/>
</dbReference>
<dbReference type="GO" id="GO:0030425">
    <property type="term" value="C:dendrite"/>
    <property type="evidence" value="ECO:0000314"/>
    <property type="project" value="RGD"/>
</dbReference>
<dbReference type="GO" id="GO:0032590">
    <property type="term" value="C:dendrite membrane"/>
    <property type="evidence" value="ECO:0000314"/>
    <property type="project" value="RGD"/>
</dbReference>
<dbReference type="GO" id="GO:0043198">
    <property type="term" value="C:dendritic shaft"/>
    <property type="evidence" value="ECO:0000314"/>
    <property type="project" value="RGD"/>
</dbReference>
<dbReference type="GO" id="GO:0098978">
    <property type="term" value="C:glutamatergic synapse"/>
    <property type="evidence" value="ECO:0000266"/>
    <property type="project" value="RGD"/>
</dbReference>
<dbReference type="GO" id="GO:0098855">
    <property type="term" value="C:HCN channel complex"/>
    <property type="evidence" value="ECO:0000250"/>
    <property type="project" value="UniProtKB"/>
</dbReference>
<dbReference type="GO" id="GO:0043025">
    <property type="term" value="C:neuronal cell body"/>
    <property type="evidence" value="ECO:0000314"/>
    <property type="project" value="RGD"/>
</dbReference>
<dbReference type="GO" id="GO:0005886">
    <property type="term" value="C:plasma membrane"/>
    <property type="evidence" value="ECO:0000250"/>
    <property type="project" value="UniProtKB"/>
</dbReference>
<dbReference type="GO" id="GO:0045211">
    <property type="term" value="C:postsynaptic membrane"/>
    <property type="evidence" value="ECO:0000266"/>
    <property type="project" value="RGD"/>
</dbReference>
<dbReference type="GO" id="GO:0048787">
    <property type="term" value="C:presynaptic active zone membrane"/>
    <property type="evidence" value="ECO:0000266"/>
    <property type="project" value="RGD"/>
</dbReference>
<dbReference type="GO" id="GO:0036477">
    <property type="term" value="C:somatodendritic compartment"/>
    <property type="evidence" value="ECO:0000314"/>
    <property type="project" value="RGD"/>
</dbReference>
<dbReference type="GO" id="GO:0030552">
    <property type="term" value="F:cAMP binding"/>
    <property type="evidence" value="ECO:0000250"/>
    <property type="project" value="UniProtKB"/>
</dbReference>
<dbReference type="GO" id="GO:0042802">
    <property type="term" value="F:identical protein binding"/>
    <property type="evidence" value="ECO:0000314"/>
    <property type="project" value="RGD"/>
</dbReference>
<dbReference type="GO" id="GO:0140232">
    <property type="term" value="F:intracellular cAMP-activated cation channel activity involved in regulation of presynaptic membrane potential"/>
    <property type="evidence" value="ECO:0000266"/>
    <property type="project" value="RGD"/>
</dbReference>
<dbReference type="GO" id="GO:0005222">
    <property type="term" value="F:intracellularly cAMP-activated cation channel activity"/>
    <property type="evidence" value="ECO:0000250"/>
    <property type="project" value="UniProtKB"/>
</dbReference>
<dbReference type="GO" id="GO:0005547">
    <property type="term" value="F:phosphatidylinositol-3,4,5-trisphosphate binding"/>
    <property type="evidence" value="ECO:0000314"/>
    <property type="project" value="RGD"/>
</dbReference>
<dbReference type="GO" id="GO:0005546">
    <property type="term" value="F:phosphatidylinositol-4,5-bisphosphate binding"/>
    <property type="evidence" value="ECO:0000314"/>
    <property type="project" value="RGD"/>
</dbReference>
<dbReference type="GO" id="GO:0022843">
    <property type="term" value="F:voltage-gated monoatomic cation channel activity"/>
    <property type="evidence" value="ECO:0000250"/>
    <property type="project" value="UniProtKB"/>
</dbReference>
<dbReference type="GO" id="GO:0005249">
    <property type="term" value="F:voltage-gated potassium channel activity"/>
    <property type="evidence" value="ECO:0000250"/>
    <property type="project" value="UniProtKB"/>
</dbReference>
<dbReference type="GO" id="GO:0005248">
    <property type="term" value="F:voltage-gated sodium channel activity"/>
    <property type="evidence" value="ECO:0000266"/>
    <property type="project" value="RGD"/>
</dbReference>
<dbReference type="GO" id="GO:0045176">
    <property type="term" value="P:apical protein localization"/>
    <property type="evidence" value="ECO:0000266"/>
    <property type="project" value="RGD"/>
</dbReference>
<dbReference type="GO" id="GO:0071320">
    <property type="term" value="P:cellular response to cAMP"/>
    <property type="evidence" value="ECO:0000250"/>
    <property type="project" value="UniProtKB"/>
</dbReference>
<dbReference type="GO" id="GO:0035458">
    <property type="term" value="P:cellular response to interferon-beta"/>
    <property type="evidence" value="ECO:0000270"/>
    <property type="project" value="RGD"/>
</dbReference>
<dbReference type="GO" id="GO:0051867">
    <property type="term" value="P:general adaptation syndrome, behavioral process"/>
    <property type="evidence" value="ECO:0000266"/>
    <property type="project" value="RGD"/>
</dbReference>
<dbReference type="GO" id="GO:0042711">
    <property type="term" value="P:maternal behavior"/>
    <property type="evidence" value="ECO:0000270"/>
    <property type="project" value="RGD"/>
</dbReference>
<dbReference type="GO" id="GO:0045759">
    <property type="term" value="P:negative regulation of action potential"/>
    <property type="evidence" value="ECO:0000315"/>
    <property type="project" value="RGD"/>
</dbReference>
<dbReference type="GO" id="GO:0019228">
    <property type="term" value="P:neuronal action potential"/>
    <property type="evidence" value="ECO:0000266"/>
    <property type="project" value="RGD"/>
</dbReference>
<dbReference type="GO" id="GO:1902632">
    <property type="term" value="P:positive regulation of membrane hyperpolarization"/>
    <property type="evidence" value="ECO:0000315"/>
    <property type="project" value="RGD"/>
</dbReference>
<dbReference type="GO" id="GO:0071805">
    <property type="term" value="P:potassium ion transmembrane transport"/>
    <property type="evidence" value="ECO:0000250"/>
    <property type="project" value="UniProtKB"/>
</dbReference>
<dbReference type="GO" id="GO:0051289">
    <property type="term" value="P:protein homotetramerization"/>
    <property type="evidence" value="ECO:0000250"/>
    <property type="project" value="UniProtKB"/>
</dbReference>
<dbReference type="GO" id="GO:0003254">
    <property type="term" value="P:regulation of membrane depolarization"/>
    <property type="evidence" value="ECO:0000314"/>
    <property type="project" value="RGD"/>
</dbReference>
<dbReference type="GO" id="GO:1902630">
    <property type="term" value="P:regulation of membrane hyperpolarization"/>
    <property type="evidence" value="ECO:0000315"/>
    <property type="project" value="RGD"/>
</dbReference>
<dbReference type="GO" id="GO:0042391">
    <property type="term" value="P:regulation of membrane potential"/>
    <property type="evidence" value="ECO:0000266"/>
    <property type="project" value="RGD"/>
</dbReference>
<dbReference type="GO" id="GO:0060078">
    <property type="term" value="P:regulation of postsynaptic membrane potential"/>
    <property type="evidence" value="ECO:0000266"/>
    <property type="project" value="RGD"/>
</dbReference>
<dbReference type="GO" id="GO:0051592">
    <property type="term" value="P:response to calcium ion"/>
    <property type="evidence" value="ECO:0000314"/>
    <property type="project" value="RGD"/>
</dbReference>
<dbReference type="GO" id="GO:1902065">
    <property type="term" value="P:response to L-glutamate"/>
    <property type="evidence" value="ECO:0000270"/>
    <property type="project" value="RGD"/>
</dbReference>
<dbReference type="GO" id="GO:0046549">
    <property type="term" value="P:retinal cone cell development"/>
    <property type="evidence" value="ECO:0000266"/>
    <property type="project" value="RGD"/>
</dbReference>
<dbReference type="GO" id="GO:0035725">
    <property type="term" value="P:sodium ion transmembrane transport"/>
    <property type="evidence" value="ECO:0000266"/>
    <property type="project" value="RGD"/>
</dbReference>
<dbReference type="CDD" id="cd00038">
    <property type="entry name" value="CAP_ED"/>
    <property type="match status" value="1"/>
</dbReference>
<dbReference type="FunFam" id="1.10.287.70:FF:000031">
    <property type="entry name" value="Potassium/sodium hyperpolarization-activated cyclic nucleotide-gated channel 1, putative"/>
    <property type="match status" value="1"/>
</dbReference>
<dbReference type="FunFam" id="1.10.287.630:FF:000002">
    <property type="entry name" value="Potassium/sodium hyperpolarization-activated cyclic nucleotide-gated channel 4"/>
    <property type="match status" value="1"/>
</dbReference>
<dbReference type="FunFam" id="2.60.120.10:FF:000007">
    <property type="entry name" value="Putative potassium/sodium hyperpolarization-activated cyclic nucleotide-gated channel 2"/>
    <property type="match status" value="1"/>
</dbReference>
<dbReference type="Gene3D" id="1.10.287.70">
    <property type="match status" value="1"/>
</dbReference>
<dbReference type="Gene3D" id="1.10.287.630">
    <property type="entry name" value="Helix hairpin bin"/>
    <property type="match status" value="1"/>
</dbReference>
<dbReference type="Gene3D" id="2.60.120.10">
    <property type="entry name" value="Jelly Rolls"/>
    <property type="match status" value="1"/>
</dbReference>
<dbReference type="InterPro" id="IPR018488">
    <property type="entry name" value="cNMP-bd_CS"/>
</dbReference>
<dbReference type="InterPro" id="IPR000595">
    <property type="entry name" value="cNMP-bd_dom"/>
</dbReference>
<dbReference type="InterPro" id="IPR018490">
    <property type="entry name" value="cNMP-bd_dom_sf"/>
</dbReference>
<dbReference type="InterPro" id="IPR005821">
    <property type="entry name" value="Ion_trans_dom"/>
</dbReference>
<dbReference type="InterPro" id="IPR013621">
    <property type="entry name" value="Ion_trans_N"/>
</dbReference>
<dbReference type="InterPro" id="IPR051413">
    <property type="entry name" value="K/Na_HCN_channel"/>
</dbReference>
<dbReference type="InterPro" id="IPR003938">
    <property type="entry name" value="K_chnl_volt-dep_EAG/ELK/ERG"/>
</dbReference>
<dbReference type="InterPro" id="IPR014710">
    <property type="entry name" value="RmlC-like_jellyroll"/>
</dbReference>
<dbReference type="PANTHER" id="PTHR45689">
    <property type="entry name" value="I[[H]] CHANNEL, ISOFORM E"/>
    <property type="match status" value="1"/>
</dbReference>
<dbReference type="PANTHER" id="PTHR45689:SF3">
    <property type="entry name" value="POTASSIUM_SODIUM HYPERPOLARIZATION-ACTIVATED CYCLIC NUCLEOTIDE-GATED CHANNEL 1"/>
    <property type="match status" value="1"/>
</dbReference>
<dbReference type="Pfam" id="PF00027">
    <property type="entry name" value="cNMP_binding"/>
    <property type="match status" value="1"/>
</dbReference>
<dbReference type="Pfam" id="PF00520">
    <property type="entry name" value="Ion_trans"/>
    <property type="match status" value="1"/>
</dbReference>
<dbReference type="Pfam" id="PF08412">
    <property type="entry name" value="Ion_trans_N"/>
    <property type="match status" value="1"/>
</dbReference>
<dbReference type="PRINTS" id="PR01463">
    <property type="entry name" value="EAGCHANLFMLY"/>
</dbReference>
<dbReference type="SMART" id="SM00100">
    <property type="entry name" value="cNMP"/>
    <property type="match status" value="1"/>
</dbReference>
<dbReference type="SUPFAM" id="SSF51206">
    <property type="entry name" value="cAMP-binding domain-like"/>
    <property type="match status" value="1"/>
</dbReference>
<dbReference type="SUPFAM" id="SSF81324">
    <property type="entry name" value="Voltage-gated potassium channels"/>
    <property type="match status" value="1"/>
</dbReference>
<dbReference type="PROSITE" id="PS00888">
    <property type="entry name" value="CNMP_BINDING_1"/>
    <property type="match status" value="1"/>
</dbReference>
<dbReference type="PROSITE" id="PS50042">
    <property type="entry name" value="CNMP_BINDING_3"/>
    <property type="match status" value="1"/>
</dbReference>
<feature type="chain" id="PRO_0000054110" description="Potassium/sodium hyperpolarization-activated cyclic nucleotide-gated channel 1">
    <location>
        <begin position="1"/>
        <end position="902"/>
    </location>
</feature>
<feature type="topological domain" description="Cytoplasmic" evidence="1">
    <location>
        <begin position="1"/>
        <end position="131"/>
    </location>
</feature>
<feature type="transmembrane region" description="Helical; Name=Segment S1" evidence="1">
    <location>
        <begin position="132"/>
        <end position="153"/>
    </location>
</feature>
<feature type="topological domain" description="Extracellular" evidence="1">
    <location>
        <begin position="154"/>
        <end position="162"/>
    </location>
</feature>
<feature type="transmembrane region" description="Helical; Name=Segment S2" evidence="1">
    <location>
        <begin position="163"/>
        <end position="183"/>
    </location>
</feature>
<feature type="topological domain" description="Cytoplasmic" evidence="1">
    <location>
        <begin position="184"/>
        <end position="204"/>
    </location>
</feature>
<feature type="transmembrane region" description="Helical; Name=Segment S3" evidence="1">
    <location>
        <begin position="205"/>
        <end position="225"/>
    </location>
</feature>
<feature type="topological domain" description="Extracellular" evidence="1">
    <location>
        <begin position="226"/>
        <end position="249"/>
    </location>
</feature>
<feature type="transmembrane region" description="Helical; Voltage-sensor; Name=Segment S4" evidence="1">
    <location>
        <begin position="250"/>
        <end position="270"/>
    </location>
</feature>
<feature type="topological domain" description="Cytoplasmic" evidence="1">
    <location>
        <begin position="271"/>
        <end position="284"/>
    </location>
</feature>
<feature type="transmembrane region" description="Helical; Name=Segment S5" evidence="1">
    <location>
        <begin position="285"/>
        <end position="307"/>
    </location>
</feature>
<feature type="topological domain" description="Extracellular" evidence="1">
    <location>
        <begin position="308"/>
        <end position="333"/>
    </location>
</feature>
<feature type="intramembrane region" description="Pore-forming; Name=Segment H5" evidence="1">
    <location>
        <begin position="334"/>
        <end position="355"/>
    </location>
</feature>
<feature type="topological domain" description="Extracellular" evidence="1">
    <location>
        <begin position="356"/>
        <end position="360"/>
    </location>
</feature>
<feature type="transmembrane region" description="Helical; Name=Segment S6" evidence="1">
    <location>
        <begin position="361"/>
        <end position="381"/>
    </location>
</feature>
<feature type="topological domain" description="Cytoplasmic" evidence="1">
    <location>
        <begin position="382"/>
        <end position="902"/>
    </location>
</feature>
<feature type="region of interest" description="Disordered" evidence="4">
    <location>
        <begin position="1"/>
        <end position="75"/>
    </location>
</feature>
<feature type="region of interest" description="Disordered" evidence="4">
    <location>
        <begin position="634"/>
        <end position="681"/>
    </location>
</feature>
<feature type="region of interest" description="Disordered" evidence="4">
    <location>
        <begin position="713"/>
        <end position="824"/>
    </location>
</feature>
<feature type="region of interest" description="Disordered" evidence="4">
    <location>
        <begin position="858"/>
        <end position="902"/>
    </location>
</feature>
<feature type="short sequence motif" description="Selectivity filter" evidence="1">
    <location>
        <begin position="347"/>
        <end position="351"/>
    </location>
</feature>
<feature type="compositionally biased region" description="Low complexity" evidence="4">
    <location>
        <begin position="639"/>
        <end position="680"/>
    </location>
</feature>
<feature type="compositionally biased region" description="Low complexity" evidence="4">
    <location>
        <begin position="720"/>
        <end position="736"/>
    </location>
</feature>
<feature type="compositionally biased region" description="Low complexity" evidence="4">
    <location>
        <begin position="744"/>
        <end position="769"/>
    </location>
</feature>
<feature type="compositionally biased region" description="Polar residues" evidence="4">
    <location>
        <begin position="770"/>
        <end position="793"/>
    </location>
</feature>
<feature type="compositionally biased region" description="Pro residues" evidence="4">
    <location>
        <begin position="867"/>
        <end position="877"/>
    </location>
</feature>
<feature type="compositionally biased region" description="Basic and acidic residues" evidence="4">
    <location>
        <begin position="889"/>
        <end position="902"/>
    </location>
</feature>
<feature type="binding site" evidence="1">
    <location>
        <position position="528"/>
    </location>
    <ligand>
        <name>3',5'-cyclic AMP</name>
        <dbReference type="ChEBI" id="CHEBI:58165"/>
    </ligand>
</feature>
<feature type="binding site" evidence="1">
    <location>
        <position position="529"/>
    </location>
    <ligand>
        <name>3',5'-cyclic AMP</name>
        <dbReference type="ChEBI" id="CHEBI:58165"/>
    </ligand>
</feature>
<feature type="binding site" evidence="1">
    <location>
        <position position="531"/>
    </location>
    <ligand>
        <name>3',5'-cyclic AMP</name>
        <dbReference type="ChEBI" id="CHEBI:58165"/>
    </ligand>
</feature>
<feature type="binding site" evidence="1">
    <location>
        <position position="538"/>
    </location>
    <ligand>
        <name>3',5'-cyclic AMP</name>
        <dbReference type="ChEBI" id="CHEBI:58165"/>
    </ligand>
</feature>
<feature type="binding site" evidence="1">
    <location>
        <position position="539"/>
    </location>
    <ligand>
        <name>3',5'-cyclic AMP</name>
        <dbReference type="ChEBI" id="CHEBI:58165"/>
    </ligand>
</feature>
<feature type="binding site" evidence="2">
    <location>
        <position position="579"/>
    </location>
    <ligand>
        <name>3',5'-cyclic AMP</name>
        <dbReference type="ChEBI" id="CHEBI:58165"/>
    </ligand>
</feature>
<feature type="binding site" evidence="1">
    <location>
        <position position="582"/>
    </location>
    <ligand>
        <name>3',5'-cyclic AMP</name>
        <dbReference type="ChEBI" id="CHEBI:58165"/>
    </ligand>
</feature>
<feature type="glycosylation site" description="N-linked (GlcNAc...) asparagine" evidence="3">
    <location>
        <position position="327"/>
    </location>
</feature>
<feature type="sequence conflict" description="In Ref. 1; AAF62173." evidence="7" ref="1">
    <original>P</original>
    <variation>T</variation>
    <location>
        <position position="736"/>
    </location>
</feature>
<feature type="sequence conflict" description="In Ref. 1; AAF62173." evidence="7" ref="1">
    <original>Q</original>
    <variation>QTQQQQQQQQ</variation>
    <location>
        <position position="737"/>
    </location>
</feature>
<feature type="sequence conflict" description="In Ref. 1; AAF62173." evidence="7" ref="1">
    <location>
        <position position="767"/>
    </location>
</feature>
<feature type="sequence conflict" description="In Ref. 1; AAF62173." evidence="7" ref="1">
    <original>N</original>
    <variation>H</variation>
    <location>
        <position position="791"/>
    </location>
</feature>
<feature type="sequence conflict" description="In Ref. 1; AAF62173." evidence="7" ref="1">
    <original>M</original>
    <variation>V</variation>
    <location>
        <position position="832"/>
    </location>
</feature>
<proteinExistence type="evidence at transcript level"/>
<sequence length="902" mass="101429">MEGGGKPNSASNSRDDGNSVYPSKAPATGPAAADKRLGTPPGGGAAGKEHGNSVCFKVDGGGGEEPAGSFEDAEGPRRQYGFMQRQFTSMLQPGVNKFSLRMFGSQKAVEKEQERVKTAGFWIIHPYSDFRFYWDLIMLIMMVGNLVIIPVGITFFTEQTTTPWIIFNVASDTVFLLDLIMNFRTGTVNEDSSEIILDPKVIKMNYLKSWFVVDFISSIPVDYIFLIVEKGMDSEVYKTARALRIVRFTKILSLLRLLRLSRLIRYIHQWEEIFHMTYDLASAVVRIFNLIGMMLLLCHWDGCLQFLVPLLQDFPPDCWVSLNEMVNDSWGKQYSYALFKAMSHMLCIGYGAQAPVSMSDLWITMLSMIVGATCYAMFVGHATALIQSLDSSRRQYQEKYKQVEQYMSFHKLPADMRQKIHDYYEHRYQGKIFDEENILSELNDPLREEIVNFNCRKLVATMPLFANADPNFVTAMLSKLRFEVFQPGDYIIREGAVGKKMYFIQHGVAGVITKSSKEMKLTDGSYFGEICLLTKGRRTASVRADTYCRLYSLSVDNFNEVLEEYPMMRRAFETVAIDRLDRIGKKNSILLQKFQKDLNTGVFNNQENEILKQIVKHDREMVQAIPPINYPQMTALNCTSSTTTPTSRMRTQSPPVYTATSLSHSNLHSPSPSTQTPQPSAILSPCSYTTAVCSPPIQSPLATRTFHYASPTASQLSLMQQPQPQLQQSQVQQTQPQPQPQPQQPQQQQQQQQQQQQQQQQQQQQQQPQTPGSSTPKNEVHKSTQALHNTNLTREVRPLSASQPSLPHEVSTMISRPHPTVGESLASIPQPMATVHSTGLQAGSRSTVPQRVTLFRQMSSGAIPPNRGVPPAPPPPAAVQRESPSVLNKDPDAEKPRFASNL</sequence>
<organism>
    <name type="scientific">Rattus norvegicus</name>
    <name type="common">Rat</name>
    <dbReference type="NCBI Taxonomy" id="10116"/>
    <lineage>
        <taxon>Eukaryota</taxon>
        <taxon>Metazoa</taxon>
        <taxon>Chordata</taxon>
        <taxon>Craniata</taxon>
        <taxon>Vertebrata</taxon>
        <taxon>Euteleostomi</taxon>
        <taxon>Mammalia</taxon>
        <taxon>Eutheria</taxon>
        <taxon>Euarchontoglires</taxon>
        <taxon>Glires</taxon>
        <taxon>Rodentia</taxon>
        <taxon>Myomorpha</taxon>
        <taxon>Muroidea</taxon>
        <taxon>Muridae</taxon>
        <taxon>Murinae</taxon>
        <taxon>Rattus</taxon>
    </lineage>
</organism>
<evidence type="ECO:0000250" key="1">
    <source>
        <dbReference type="UniProtKB" id="O60741"/>
    </source>
</evidence>
<evidence type="ECO:0000250" key="2">
    <source>
        <dbReference type="UniProtKB" id="O88704"/>
    </source>
</evidence>
<evidence type="ECO:0000255" key="3"/>
<evidence type="ECO:0000256" key="4">
    <source>
        <dbReference type="SAM" id="MobiDB-lite"/>
    </source>
</evidence>
<evidence type="ECO:0000269" key="5">
    <source>
    </source>
</evidence>
<evidence type="ECO:0000269" key="6">
    <source>
    </source>
</evidence>
<evidence type="ECO:0000305" key="7"/>
<comment type="function">
    <text evidence="1 2 6">Hyperpolarization-activated ion channel that are permeable to sodium and potassium ions. Exhibits weak selectivity for potassium over sodium ions. Contributes to the native pacemaker currents in heart (If) and in neurons (Ih) (By similarity). Participates in cerebellar mechanisms of motor learning (By similarity). May mediate responses to sour stimuli (PubMed:11675786).</text>
</comment>
<comment type="catalytic activity">
    <reaction evidence="2">
        <text>Na(+)(in) = Na(+)(out)</text>
        <dbReference type="Rhea" id="RHEA:34963"/>
        <dbReference type="ChEBI" id="CHEBI:29101"/>
    </reaction>
</comment>
<comment type="catalytic activity">
    <reaction evidence="2">
        <text>K(+)(in) = K(+)(out)</text>
        <dbReference type="Rhea" id="RHEA:29463"/>
        <dbReference type="ChEBI" id="CHEBI:29103"/>
    </reaction>
</comment>
<comment type="activity regulation">
    <text evidence="2">Activated by cAMP, and at 10-100 times higher concentrations, also by cGMP. cAMP binding promotes tetramerization and formation of an active channel. Compared to other family members, cAMP has less stimulatory effect on HCN1 because part of the molecules already contain bound cAMP and form homotetramers when cAMP levels are low, this inherent tetramerization in HCN1 results in a weaker response to increased cAMP (By similarity).</text>
</comment>
<comment type="subunit">
    <text evidence="1 2">Homotetramer. Heterotetramer with HCN2. The potassium channel is composed of a homo- or heterotetrameric complex of pore-forming subunits. Interacts with KCNE2 (By similarity). Interacts with the SH3 domain of CSK (By similarity).</text>
</comment>
<comment type="subcellular location">
    <subcellularLocation>
        <location evidence="6">Cell membrane</location>
        <topology evidence="1">Multi-pass membrane protein</topology>
    </subcellularLocation>
</comment>
<comment type="tissue specificity">
    <text evidence="5 6">Highly expressed in cerebral cortex, cerebellum, throughout the hippocampus, in medial habenula, anterior dorsal nucleus in the thalamus, tenia tecta, several nuclei of the general motor system and in optic nerve layer. Detected in a subset of elongated cells in taste buds.</text>
</comment>
<comment type="domain">
    <text evidence="1">The segment S4 is probably the voltage-sensor and is characterized by a series of positively charged amino acids at every third position.</text>
</comment>
<comment type="similarity">
    <text evidence="7">Belongs to the potassium channel HCN family.</text>
</comment>